<proteinExistence type="inferred from homology"/>
<comment type="function">
    <text>The light-harvesting complex (LHC) functions as a light receptor, it captures and delivers excitation energy to photosystems with which it is closely associated.</text>
</comment>
<comment type="cofactor">
    <text evidence="1">Binds at least 14 chlorophylls (8 Chl-a and 6 Chl-b) and carotenoids such as lutein and neoxanthin.</text>
</comment>
<comment type="subunit">
    <text>The LHC complex consists of chlorophyll a-b binding proteins.</text>
</comment>
<comment type="subcellular location">
    <subcellularLocation>
        <location>Plastid</location>
        <location>Chloroplast thylakoid membrane</location>
        <topology>Multi-pass membrane protein</topology>
    </subcellularLocation>
</comment>
<comment type="domain">
    <text>The N-terminus of the protein extends into the stroma where it is involved with adhesion of granal membranes and post-translational modifications; both are believed to mediate the distribution of excitation energy between photosystems I and II.</text>
</comment>
<comment type="PTM">
    <text evidence="1">Photoregulated by reversible phosphorylation of its threonine residues.</text>
</comment>
<comment type="similarity">
    <text evidence="5">Belongs to the light-harvesting chlorophyll a/b-binding (LHC) protein family.</text>
</comment>
<reference key="1">
    <citation type="journal article" date="1988" name="Plant Mol. Biol.">
        <title>Assembly of the barley light-harvesting chlorophyll alpha/b proteins in barley etiochloroplasts involves processing of the precursor on thylakoids.</title>
        <authorList>
            <person name="Chitnis P.R."/>
            <person name="Morishige D.T."/>
            <person name="Nechusthtai R."/>
            <person name="Thornber J.P."/>
        </authorList>
        <dbReference type="AGRICOLA" id="IND92000062"/>
    </citation>
    <scope>NUCLEOTIDE SEQUENCE [GENOMIC DNA]</scope>
    <source>
        <tissue>Seedling</tissue>
    </source>
</reference>
<sequence>MAAATMALSSSTFAGKAVKNLSSSSEVQGDARVSMRKTAATKKVGSPWYGPDRVKYLGPFSGESPSYLTGEFPGDYGWDTAGLSADPETFAKNRELEVIHGRWAMLGALGCVFPELLARNGVKFGEAVWFKKGSQIFSEGGLQYLGNPSLVHAQSILAIWACQVVLMGAVEGYRVAGGPLGEVVDPLYPGGSFDPLGLADDAEAFAELKVKEIKNGRLAMFSMFGFFVQAIVTGKGPLENLADHLADPVNNNAWAFATNFVPGK</sequence>
<protein>
    <recommendedName>
        <fullName>Chlorophyll a-b binding protein 2, chloroplastic</fullName>
    </recommendedName>
    <alternativeName>
        <fullName>LHCII type I CAB-2</fullName>
        <shortName>LHCP</shortName>
    </alternativeName>
</protein>
<dbReference type="EMBL" id="X12735">
    <property type="protein sequence ID" value="CAA31232.1"/>
    <property type="molecule type" value="Genomic_DNA"/>
</dbReference>
<dbReference type="PIR" id="S04028">
    <property type="entry name" value="S04028"/>
</dbReference>
<dbReference type="SMR" id="P08963"/>
<dbReference type="GO" id="GO:0009535">
    <property type="term" value="C:chloroplast thylakoid membrane"/>
    <property type="evidence" value="ECO:0007669"/>
    <property type="project" value="UniProtKB-SubCell"/>
</dbReference>
<dbReference type="GO" id="GO:0009522">
    <property type="term" value="C:photosystem I"/>
    <property type="evidence" value="ECO:0007669"/>
    <property type="project" value="UniProtKB-KW"/>
</dbReference>
<dbReference type="GO" id="GO:0009523">
    <property type="term" value="C:photosystem II"/>
    <property type="evidence" value="ECO:0007669"/>
    <property type="project" value="UniProtKB-KW"/>
</dbReference>
<dbReference type="GO" id="GO:0016168">
    <property type="term" value="F:chlorophyll binding"/>
    <property type="evidence" value="ECO:0007669"/>
    <property type="project" value="UniProtKB-KW"/>
</dbReference>
<dbReference type="GO" id="GO:0046872">
    <property type="term" value="F:metal ion binding"/>
    <property type="evidence" value="ECO:0007669"/>
    <property type="project" value="UniProtKB-KW"/>
</dbReference>
<dbReference type="GO" id="GO:0009765">
    <property type="term" value="P:photosynthesis, light harvesting"/>
    <property type="evidence" value="ECO:0007669"/>
    <property type="project" value="InterPro"/>
</dbReference>
<dbReference type="FunFam" id="1.10.3460.10:FF:000001">
    <property type="entry name" value="Chlorophyll a-b binding protein, chloroplastic"/>
    <property type="match status" value="1"/>
</dbReference>
<dbReference type="Gene3D" id="1.10.3460.10">
    <property type="entry name" value="Chlorophyll a/b binding protein domain"/>
    <property type="match status" value="1"/>
</dbReference>
<dbReference type="InterPro" id="IPR001344">
    <property type="entry name" value="Chloro_AB-bd_pln"/>
</dbReference>
<dbReference type="InterPro" id="IPR022796">
    <property type="entry name" value="Chloroa_b-bind"/>
</dbReference>
<dbReference type="PANTHER" id="PTHR21649">
    <property type="entry name" value="CHLOROPHYLL A/B BINDING PROTEIN"/>
    <property type="match status" value="1"/>
</dbReference>
<dbReference type="Pfam" id="PF00504">
    <property type="entry name" value="Chloroa_b-bind"/>
    <property type="match status" value="1"/>
</dbReference>
<dbReference type="SUPFAM" id="SSF103511">
    <property type="entry name" value="Chlorophyll a-b binding protein"/>
    <property type="match status" value="1"/>
</dbReference>
<evidence type="ECO:0000250" key="1"/>
<evidence type="ECO:0000250" key="2">
    <source>
        <dbReference type="UniProtKB" id="P07371"/>
    </source>
</evidence>
<evidence type="ECO:0000250" key="3">
    <source>
        <dbReference type="UniProtKB" id="P12333"/>
    </source>
</evidence>
<evidence type="ECO:0000255" key="4"/>
<evidence type="ECO:0000305" key="5"/>
<organism>
    <name type="scientific">Hordeum vulgare</name>
    <name type="common">Barley</name>
    <dbReference type="NCBI Taxonomy" id="4513"/>
    <lineage>
        <taxon>Eukaryota</taxon>
        <taxon>Viridiplantae</taxon>
        <taxon>Streptophyta</taxon>
        <taxon>Embryophyta</taxon>
        <taxon>Tracheophyta</taxon>
        <taxon>Spermatophyta</taxon>
        <taxon>Magnoliopsida</taxon>
        <taxon>Liliopsida</taxon>
        <taxon>Poales</taxon>
        <taxon>Poaceae</taxon>
        <taxon>BOP clade</taxon>
        <taxon>Pooideae</taxon>
        <taxon>Triticodae</taxon>
        <taxon>Triticeae</taxon>
        <taxon>Hordeinae</taxon>
        <taxon>Hordeum</taxon>
    </lineage>
</organism>
<feature type="transit peptide" description="Chloroplast" evidence="5">
    <location>
        <begin position="1"/>
        <end position="35"/>
    </location>
</feature>
<feature type="chain" id="PRO_0000003660" description="Chlorophyll a-b binding protein 2, chloroplastic">
    <location>
        <begin position="36"/>
        <end position="264"/>
    </location>
</feature>
<feature type="transmembrane region" description="Helical" evidence="4">
    <location>
        <begin position="98"/>
        <end position="118"/>
    </location>
</feature>
<feature type="transmembrane region" description="Helical" evidence="4">
    <location>
        <begin position="150"/>
        <end position="170"/>
    </location>
</feature>
<feature type="transmembrane region" description="Helical" evidence="4">
    <location>
        <begin position="218"/>
        <end position="238"/>
    </location>
</feature>
<feature type="binding site" description="axial binding residue" evidence="3">
    <location>
        <position position="56"/>
    </location>
    <ligand>
        <name>chlorophyll b</name>
        <dbReference type="ChEBI" id="CHEBI:61721"/>
        <label>1</label>
    </ligand>
    <ligandPart>
        <name>Mg</name>
        <dbReference type="ChEBI" id="CHEBI:25107"/>
    </ligandPart>
</feature>
<feature type="binding site" evidence="1">
    <location>
        <position position="78"/>
    </location>
    <ligand>
        <name>chlorophyll a</name>
        <dbReference type="ChEBI" id="CHEBI:58416"/>
        <label>1</label>
    </ligand>
</feature>
<feature type="binding site" evidence="1">
    <location>
        <position position="84"/>
    </location>
    <ligand>
        <name>chlorophyll a</name>
        <dbReference type="ChEBI" id="CHEBI:58416"/>
        <label>1</label>
    </ligand>
</feature>
<feature type="binding site" description="axial binding residue" evidence="3">
    <location>
        <position position="97"/>
    </location>
    <ligand>
        <name>chlorophyll a</name>
        <dbReference type="ChEBI" id="CHEBI:58416"/>
        <label>1</label>
    </ligand>
    <ligandPart>
        <name>Mg</name>
        <dbReference type="ChEBI" id="CHEBI:25107"/>
    </ligandPart>
</feature>
<feature type="binding site" description="axial binding residue" evidence="3">
    <location>
        <position position="100"/>
    </location>
    <ligand>
        <name>chlorophyll a</name>
        <dbReference type="ChEBI" id="CHEBI:58416"/>
        <label>2</label>
    </ligand>
    <ligandPart>
        <name>Mg</name>
        <dbReference type="ChEBI" id="CHEBI:25107"/>
    </ligandPart>
</feature>
<feature type="binding site" evidence="1">
    <location>
        <position position="102"/>
    </location>
    <ligand>
        <name>chlorophyll b</name>
        <dbReference type="ChEBI" id="CHEBI:61721"/>
        <label>2</label>
    </ligand>
</feature>
<feature type="binding site" evidence="1">
    <location>
        <position position="135"/>
    </location>
    <ligand>
        <name>chlorophyll a</name>
        <dbReference type="ChEBI" id="CHEBI:58416"/>
        <label>3</label>
    </ligand>
</feature>
<feature type="binding site" evidence="1">
    <location>
        <position position="145"/>
    </location>
    <ligand>
        <name>chlorophyll a</name>
        <dbReference type="ChEBI" id="CHEBI:58416"/>
        <label>3</label>
    </ligand>
</feature>
<feature type="binding site" description="axial binding residue" evidence="3">
    <location>
        <position position="151"/>
    </location>
    <ligand>
        <name>chlorophyll b</name>
        <dbReference type="ChEBI" id="CHEBI:61721"/>
        <label>2</label>
    </ligand>
    <ligandPart>
        <name>Mg</name>
        <dbReference type="ChEBI" id="CHEBI:25107"/>
    </ligandPart>
</feature>
<feature type="binding site" evidence="1">
    <location>
        <position position="155"/>
    </location>
    <ligand>
        <name>chlorophyll b</name>
        <dbReference type="ChEBI" id="CHEBI:61721"/>
        <label>3</label>
    </ligand>
</feature>
<feature type="binding site" evidence="1">
    <location>
        <position position="163"/>
    </location>
    <ligand>
        <name>chlorophyll b</name>
        <dbReference type="ChEBI" id="CHEBI:61721"/>
        <label>4</label>
    </ligand>
</feature>
<feature type="binding site" evidence="2">
    <location>
        <position position="163"/>
    </location>
    <ligand>
        <name>chlorophyll b</name>
        <dbReference type="ChEBI" id="CHEBI:61721"/>
        <label>5</label>
    </ligand>
</feature>
<feature type="binding site" description="axial binding residue" evidence="3">
    <location>
        <position position="171"/>
    </location>
    <ligand>
        <name>chlorophyll b</name>
        <dbReference type="ChEBI" id="CHEBI:61721"/>
        <label>3</label>
    </ligand>
    <ligandPart>
        <name>Mg</name>
        <dbReference type="ChEBI" id="CHEBI:25107"/>
    </ligandPart>
</feature>
<feature type="binding site" evidence="1">
    <location>
        <position position="174"/>
    </location>
    <ligand>
        <name>chlorophyll b</name>
        <dbReference type="ChEBI" id="CHEBI:61721"/>
        <label>4</label>
    </ligand>
</feature>
<feature type="binding site" evidence="1">
    <location>
        <position position="180"/>
    </location>
    <ligand>
        <name>chlorophyll b</name>
        <dbReference type="ChEBI" id="CHEBI:61721"/>
        <label>2</label>
    </ligand>
</feature>
<feature type="binding site" evidence="1">
    <location>
        <position position="211"/>
    </location>
    <ligand>
        <name>chlorophyll a</name>
        <dbReference type="ChEBI" id="CHEBI:58416"/>
        <label>5</label>
    </ligand>
</feature>
<feature type="binding site" description="axial binding residue" evidence="3">
    <location>
        <position position="212"/>
    </location>
    <ligand>
        <name>chlorophyll a</name>
        <dbReference type="ChEBI" id="CHEBI:58416"/>
        <label>3</label>
    </ligand>
    <ligandPart>
        <name>Mg</name>
        <dbReference type="ChEBI" id="CHEBI:25107"/>
    </ligandPart>
</feature>
<feature type="binding site" description="axial binding residue" evidence="3">
    <location>
        <position position="215"/>
    </location>
    <ligand>
        <name>chlorophyll a</name>
        <dbReference type="ChEBI" id="CHEBI:58416"/>
        <label>4</label>
    </ligand>
    <ligandPart>
        <name>Mg</name>
        <dbReference type="ChEBI" id="CHEBI:25107"/>
    </ligandPart>
</feature>
<feature type="binding site" evidence="1">
    <location>
        <position position="217"/>
    </location>
    <ligand>
        <name>chlorophyll a</name>
        <dbReference type="ChEBI" id="CHEBI:58416"/>
        <label>1</label>
    </ligand>
</feature>
<feature type="binding site" description="axial binding residue" evidence="3">
    <location>
        <position position="229"/>
    </location>
    <ligand>
        <name>chlorophyll a</name>
        <dbReference type="ChEBI" id="CHEBI:58416"/>
        <label>5</label>
    </ligand>
    <ligandPart>
        <name>Mg</name>
        <dbReference type="ChEBI" id="CHEBI:25107"/>
    </ligandPart>
</feature>
<feature type="binding site" description="axial binding residue" evidence="3">
    <location>
        <position position="244"/>
    </location>
    <ligand>
        <name>chlorophyll a</name>
        <dbReference type="ChEBI" id="CHEBI:58416"/>
        <label>6</label>
    </ligand>
    <ligandPart>
        <name>Mg</name>
        <dbReference type="ChEBI" id="CHEBI:25107"/>
    </ligandPart>
</feature>
<feature type="binding site" evidence="1">
    <location>
        <position position="253"/>
    </location>
    <ligand>
        <name>chlorophyll a</name>
        <dbReference type="ChEBI" id="CHEBI:58416"/>
        <label>6</label>
    </ligand>
</feature>
<feature type="binding site" evidence="1">
    <location>
        <position position="260"/>
    </location>
    <ligand>
        <name>chlorophyll b</name>
        <dbReference type="ChEBI" id="CHEBI:61721"/>
        <label>5</label>
    </ligand>
</feature>
<feature type="modified residue" description="N2-acetylarginine" evidence="1">
    <location>
        <position position="36"/>
    </location>
</feature>
<feature type="modified residue" description="Phosphothreonine" evidence="1">
    <location>
        <position position="38"/>
    </location>
</feature>
<accession>P08963</accession>
<name>CB22_HORVU</name>
<gene>
    <name type="primary">CAB2</name>
</gene>
<keyword id="KW-0007">Acetylation</keyword>
<keyword id="KW-0148">Chlorophyll</keyword>
<keyword id="KW-0150">Chloroplast</keyword>
<keyword id="KW-0157">Chromophore</keyword>
<keyword id="KW-0460">Magnesium</keyword>
<keyword id="KW-0472">Membrane</keyword>
<keyword id="KW-0479">Metal-binding</keyword>
<keyword id="KW-0597">Phosphoprotein</keyword>
<keyword id="KW-0602">Photosynthesis</keyword>
<keyword id="KW-0603">Photosystem I</keyword>
<keyword id="KW-0604">Photosystem II</keyword>
<keyword id="KW-0934">Plastid</keyword>
<keyword id="KW-0793">Thylakoid</keyword>
<keyword id="KW-0809">Transit peptide</keyword>
<keyword id="KW-0812">Transmembrane</keyword>
<keyword id="KW-1133">Transmembrane helix</keyword>